<dbReference type="EMBL" id="AB013492">
    <property type="protein sequence ID" value="BAA82688.1"/>
    <property type="molecule type" value="Genomic_DNA"/>
</dbReference>
<dbReference type="EMBL" id="BA000004">
    <property type="protein sequence ID" value="BAB03723.1"/>
    <property type="molecule type" value="Genomic_DNA"/>
</dbReference>
<dbReference type="PIR" id="D83650">
    <property type="entry name" value="D83650"/>
</dbReference>
<dbReference type="RefSeq" id="WP_010896188.1">
    <property type="nucleotide sequence ID" value="NC_002570.2"/>
</dbReference>
<dbReference type="SMR" id="Q9RC99"/>
<dbReference type="STRING" id="272558.gene:10725819"/>
<dbReference type="KEGG" id="bha:BH0004"/>
<dbReference type="eggNOG" id="COG1195">
    <property type="taxonomic scope" value="Bacteria"/>
</dbReference>
<dbReference type="HOGENOM" id="CLU_040267_0_1_9"/>
<dbReference type="OrthoDB" id="9803889at2"/>
<dbReference type="Proteomes" id="UP000001258">
    <property type="component" value="Chromosome"/>
</dbReference>
<dbReference type="GO" id="GO:0005737">
    <property type="term" value="C:cytoplasm"/>
    <property type="evidence" value="ECO:0007669"/>
    <property type="project" value="UniProtKB-SubCell"/>
</dbReference>
<dbReference type="GO" id="GO:0005524">
    <property type="term" value="F:ATP binding"/>
    <property type="evidence" value="ECO:0007669"/>
    <property type="project" value="UniProtKB-UniRule"/>
</dbReference>
<dbReference type="GO" id="GO:0003697">
    <property type="term" value="F:single-stranded DNA binding"/>
    <property type="evidence" value="ECO:0007669"/>
    <property type="project" value="UniProtKB-UniRule"/>
</dbReference>
<dbReference type="GO" id="GO:0006260">
    <property type="term" value="P:DNA replication"/>
    <property type="evidence" value="ECO:0007669"/>
    <property type="project" value="UniProtKB-UniRule"/>
</dbReference>
<dbReference type="GO" id="GO:0000731">
    <property type="term" value="P:DNA synthesis involved in DNA repair"/>
    <property type="evidence" value="ECO:0007669"/>
    <property type="project" value="TreeGrafter"/>
</dbReference>
<dbReference type="GO" id="GO:0006302">
    <property type="term" value="P:double-strand break repair"/>
    <property type="evidence" value="ECO:0007669"/>
    <property type="project" value="TreeGrafter"/>
</dbReference>
<dbReference type="GO" id="GO:0009432">
    <property type="term" value="P:SOS response"/>
    <property type="evidence" value="ECO:0007669"/>
    <property type="project" value="UniProtKB-UniRule"/>
</dbReference>
<dbReference type="CDD" id="cd03242">
    <property type="entry name" value="ABC_RecF"/>
    <property type="match status" value="1"/>
</dbReference>
<dbReference type="FunFam" id="1.20.1050.90:FF:000002">
    <property type="entry name" value="DNA replication and repair protein RecF"/>
    <property type="match status" value="1"/>
</dbReference>
<dbReference type="Gene3D" id="3.40.50.300">
    <property type="entry name" value="P-loop containing nucleotide triphosphate hydrolases"/>
    <property type="match status" value="1"/>
</dbReference>
<dbReference type="Gene3D" id="1.20.1050.90">
    <property type="entry name" value="RecF/RecN/SMC, N-terminal domain"/>
    <property type="match status" value="1"/>
</dbReference>
<dbReference type="HAMAP" id="MF_00365">
    <property type="entry name" value="RecF"/>
    <property type="match status" value="1"/>
</dbReference>
<dbReference type="InterPro" id="IPR001238">
    <property type="entry name" value="DNA-binding_RecF"/>
</dbReference>
<dbReference type="InterPro" id="IPR018078">
    <property type="entry name" value="DNA-binding_RecF_CS"/>
</dbReference>
<dbReference type="InterPro" id="IPR027417">
    <property type="entry name" value="P-loop_NTPase"/>
</dbReference>
<dbReference type="InterPro" id="IPR003395">
    <property type="entry name" value="RecF/RecN/SMC_N"/>
</dbReference>
<dbReference type="InterPro" id="IPR042174">
    <property type="entry name" value="RecF_2"/>
</dbReference>
<dbReference type="NCBIfam" id="TIGR00611">
    <property type="entry name" value="recf"/>
    <property type="match status" value="1"/>
</dbReference>
<dbReference type="PANTHER" id="PTHR32182">
    <property type="entry name" value="DNA REPLICATION AND REPAIR PROTEIN RECF"/>
    <property type="match status" value="1"/>
</dbReference>
<dbReference type="PANTHER" id="PTHR32182:SF0">
    <property type="entry name" value="DNA REPLICATION AND REPAIR PROTEIN RECF"/>
    <property type="match status" value="1"/>
</dbReference>
<dbReference type="Pfam" id="PF02463">
    <property type="entry name" value="SMC_N"/>
    <property type="match status" value="1"/>
</dbReference>
<dbReference type="SUPFAM" id="SSF52540">
    <property type="entry name" value="P-loop containing nucleoside triphosphate hydrolases"/>
    <property type="match status" value="1"/>
</dbReference>
<dbReference type="PROSITE" id="PS00617">
    <property type="entry name" value="RECF_1"/>
    <property type="match status" value="1"/>
</dbReference>
<dbReference type="PROSITE" id="PS00618">
    <property type="entry name" value="RECF_2"/>
    <property type="match status" value="1"/>
</dbReference>
<accession>Q9RC99</accession>
<gene>
    <name type="primary">recF</name>
    <name type="ordered locus">BH0004</name>
</gene>
<comment type="function">
    <text evidence="1">The RecF protein is involved in DNA metabolism; it is required for DNA replication and normal SOS inducibility. RecF binds preferentially to single-stranded, linear DNA. It also seems to bind ATP (By similarity).</text>
</comment>
<comment type="subcellular location">
    <subcellularLocation>
        <location evidence="1">Cytoplasm</location>
    </subcellularLocation>
</comment>
<comment type="similarity">
    <text evidence="3">Belongs to the RecF family.</text>
</comment>
<evidence type="ECO:0000250" key="1"/>
<evidence type="ECO:0000255" key="2"/>
<evidence type="ECO:0000305" key="3"/>
<sequence>MHIERLTLKQFRNYDELDVSFEPNVNVIIGENAQGKTNVIEAIYFLALAKSHRTARDKELIQWEAPFARIEGAFQKQNGPLSLHVVLSGKGKKVKVNGLEQRRLSDYIGAVNVVMFGPEDLNLVKGSPQIRRRFLDMELGQMSPVYLHQLAMYQKILLQRNHLLKQLFGKANSDPMLDVLTDQLIEVAVEVTKKRFEFIQLLQRWAEEIHQAISRGKEKLVITYEPSVHVSEQLNLSKLREGFYQAYEQKKERERQRGTTLFGPHRDDLVFFVNDKDVQTYGSQGQQRTTALSLKLAEIELMKETVGDYPILLLDDVLSELDDYRQSHLLHAIQHRVQTFVTTTNVDGIDHQTLQEATIYEVEQGSLKKKG</sequence>
<protein>
    <recommendedName>
        <fullName>DNA replication and repair protein RecF</fullName>
    </recommendedName>
</protein>
<proteinExistence type="inferred from homology"/>
<name>RECF_HALH5</name>
<feature type="chain" id="PRO_0000196397" description="DNA replication and repair protein RecF">
    <location>
        <begin position="1"/>
        <end position="371"/>
    </location>
</feature>
<feature type="binding site" evidence="2">
    <location>
        <begin position="30"/>
        <end position="37"/>
    </location>
    <ligand>
        <name>ATP</name>
        <dbReference type="ChEBI" id="CHEBI:30616"/>
    </ligand>
</feature>
<reference key="1">
    <citation type="journal article" date="1999" name="Biosci. Biotechnol. Biochem.">
        <title>Replication origin region of the chromosome of alkaliphilic Bacillus halodurans C-125.</title>
        <authorList>
            <person name="Takami H."/>
            <person name="Masui N."/>
            <person name="Nakasone K."/>
            <person name="Horikoshi K."/>
        </authorList>
    </citation>
    <scope>NUCLEOTIDE SEQUENCE [GENOMIC DNA]</scope>
    <source>
        <strain>ATCC BAA-125 / DSM 18197 / FERM 7344 / JCM 9153 / C-125</strain>
    </source>
</reference>
<reference key="2">
    <citation type="journal article" date="2000" name="Nucleic Acids Res.">
        <title>Complete genome sequence of the alkaliphilic bacterium Bacillus halodurans and genomic sequence comparison with Bacillus subtilis.</title>
        <authorList>
            <person name="Takami H."/>
            <person name="Nakasone K."/>
            <person name="Takaki Y."/>
            <person name="Maeno G."/>
            <person name="Sasaki R."/>
            <person name="Masui N."/>
            <person name="Fuji F."/>
            <person name="Hirama C."/>
            <person name="Nakamura Y."/>
            <person name="Ogasawara N."/>
            <person name="Kuhara S."/>
            <person name="Horikoshi K."/>
        </authorList>
    </citation>
    <scope>NUCLEOTIDE SEQUENCE [LARGE SCALE GENOMIC DNA]</scope>
    <source>
        <strain>ATCC BAA-125 / DSM 18197 / FERM 7344 / JCM 9153 / C-125</strain>
    </source>
</reference>
<organism>
    <name type="scientific">Halalkalibacterium halodurans (strain ATCC BAA-125 / DSM 18197 / FERM 7344 / JCM 9153 / C-125)</name>
    <name type="common">Bacillus halodurans</name>
    <dbReference type="NCBI Taxonomy" id="272558"/>
    <lineage>
        <taxon>Bacteria</taxon>
        <taxon>Bacillati</taxon>
        <taxon>Bacillota</taxon>
        <taxon>Bacilli</taxon>
        <taxon>Bacillales</taxon>
        <taxon>Bacillaceae</taxon>
        <taxon>Halalkalibacterium (ex Joshi et al. 2022)</taxon>
    </lineage>
</organism>
<keyword id="KW-0067">ATP-binding</keyword>
<keyword id="KW-0963">Cytoplasm</keyword>
<keyword id="KW-0227">DNA damage</keyword>
<keyword id="KW-0234">DNA repair</keyword>
<keyword id="KW-0235">DNA replication</keyword>
<keyword id="KW-0238">DNA-binding</keyword>
<keyword id="KW-0547">Nucleotide-binding</keyword>
<keyword id="KW-1185">Reference proteome</keyword>
<keyword id="KW-0742">SOS response</keyword>